<name>ENPLL_HUMAN</name>
<protein>
    <recommendedName>
        <fullName>Putative endoplasmin-like protein</fullName>
    </recommendedName>
    <alternativeName>
        <fullName>Putative heat shock protein 90 kDa beta member 2</fullName>
    </alternativeName>
</protein>
<feature type="chain" id="PRO_0000349258" description="Putative endoplasmin-like protein">
    <location>
        <begin position="1"/>
        <end position="399"/>
    </location>
</feature>
<feature type="region of interest" description="Disordered" evidence="2">
    <location>
        <begin position="350"/>
        <end position="399"/>
    </location>
</feature>
<feature type="compositionally biased region" description="Acidic residues" evidence="2">
    <location>
        <begin position="354"/>
        <end position="367"/>
    </location>
</feature>
<feature type="compositionally biased region" description="Basic and acidic residues" evidence="2">
    <location>
        <begin position="368"/>
        <end position="399"/>
    </location>
</feature>
<feature type="cross-link" description="Glycyl lysine isopeptide (Lys-Gly) (interchain with G-Cter in SUMO2)" evidence="4">
    <location>
        <position position="130"/>
    </location>
</feature>
<dbReference type="EMBL" id="AY956768">
    <property type="protein sequence ID" value="AAX38255.1"/>
    <property type="molecule type" value="mRNA"/>
</dbReference>
<dbReference type="SMR" id="Q58FF3"/>
<dbReference type="FunCoup" id="Q58FF3">
    <property type="interactions" value="19"/>
</dbReference>
<dbReference type="IntAct" id="Q58FF3">
    <property type="interactions" value="7"/>
</dbReference>
<dbReference type="GlyGen" id="Q58FF3">
    <property type="glycosylation" value="1 site"/>
</dbReference>
<dbReference type="iPTMnet" id="Q58FF3"/>
<dbReference type="PhosphoSitePlus" id="Q58FF3"/>
<dbReference type="SwissPalm" id="Q58FF3"/>
<dbReference type="BioMuta" id="HGNC:12099"/>
<dbReference type="DMDM" id="74706932"/>
<dbReference type="jPOST" id="Q58FF3"/>
<dbReference type="MassIVE" id="Q58FF3"/>
<dbReference type="ProteomicsDB" id="62620"/>
<dbReference type="AGR" id="HGNC:12099"/>
<dbReference type="GeneCards" id="HSP90B2P"/>
<dbReference type="HGNC" id="HGNC:12099">
    <property type="gene designation" value="HSP90B2P"/>
</dbReference>
<dbReference type="neXtProt" id="NX_Q58FF3"/>
<dbReference type="InParanoid" id="Q58FF3"/>
<dbReference type="PAN-GO" id="Q58FF3">
    <property type="GO annotations" value="4 GO annotations based on evolutionary models"/>
</dbReference>
<dbReference type="PhylomeDB" id="Q58FF3"/>
<dbReference type="PathwayCommons" id="Q58FF3"/>
<dbReference type="SignaLink" id="Q58FF3"/>
<dbReference type="Pharos" id="Q58FF3">
    <property type="development level" value="Tdark"/>
</dbReference>
<dbReference type="Proteomes" id="UP000005640">
    <property type="component" value="Unplaced"/>
</dbReference>
<dbReference type="RNAct" id="Q58FF3">
    <property type="molecule type" value="protein"/>
</dbReference>
<dbReference type="GO" id="GO:0005743">
    <property type="term" value="C:mitochondrial inner membrane"/>
    <property type="evidence" value="ECO:0000318"/>
    <property type="project" value="GO_Central"/>
</dbReference>
<dbReference type="GO" id="GO:0005524">
    <property type="term" value="F:ATP binding"/>
    <property type="evidence" value="ECO:0000318"/>
    <property type="project" value="GO_Central"/>
</dbReference>
<dbReference type="GO" id="GO:0016887">
    <property type="term" value="F:ATP hydrolysis activity"/>
    <property type="evidence" value="ECO:0000318"/>
    <property type="project" value="GO_Central"/>
</dbReference>
<dbReference type="GO" id="GO:0140662">
    <property type="term" value="F:ATP-dependent protein folding chaperone"/>
    <property type="evidence" value="ECO:0007669"/>
    <property type="project" value="InterPro"/>
</dbReference>
<dbReference type="GO" id="GO:0019901">
    <property type="term" value="F:protein kinase binding"/>
    <property type="evidence" value="ECO:0000318"/>
    <property type="project" value="GO_Central"/>
</dbReference>
<dbReference type="GO" id="GO:0051082">
    <property type="term" value="F:unfolded protein binding"/>
    <property type="evidence" value="ECO:0000318"/>
    <property type="project" value="GO_Central"/>
</dbReference>
<dbReference type="GO" id="GO:0006457">
    <property type="term" value="P:protein folding"/>
    <property type="evidence" value="ECO:0000318"/>
    <property type="project" value="GO_Central"/>
</dbReference>
<dbReference type="FunFam" id="3.30.230.80:FF:000003">
    <property type="entry name" value="endoplasmin isoform X1"/>
    <property type="match status" value="1"/>
</dbReference>
<dbReference type="Gene3D" id="3.30.230.80">
    <property type="match status" value="1"/>
</dbReference>
<dbReference type="Gene3D" id="3.40.50.11260">
    <property type="match status" value="2"/>
</dbReference>
<dbReference type="Gene3D" id="1.20.120.790">
    <property type="entry name" value="Heat shock protein 90, C-terminal domain"/>
    <property type="match status" value="1"/>
</dbReference>
<dbReference type="InterPro" id="IPR037196">
    <property type="entry name" value="HSP90_C"/>
</dbReference>
<dbReference type="InterPro" id="IPR001404">
    <property type="entry name" value="Hsp90_fam"/>
</dbReference>
<dbReference type="InterPro" id="IPR020568">
    <property type="entry name" value="Ribosomal_Su5_D2-typ_SF"/>
</dbReference>
<dbReference type="PANTHER" id="PTHR11528">
    <property type="entry name" value="HEAT SHOCK PROTEIN 90 FAMILY MEMBER"/>
    <property type="match status" value="1"/>
</dbReference>
<dbReference type="Pfam" id="PF00183">
    <property type="entry name" value="HSP90"/>
    <property type="match status" value="1"/>
</dbReference>
<dbReference type="SUPFAM" id="SSF110942">
    <property type="entry name" value="HSP90 C-terminal domain"/>
    <property type="match status" value="1"/>
</dbReference>
<dbReference type="SUPFAM" id="SSF54211">
    <property type="entry name" value="Ribosomal protein S5 domain 2-like"/>
    <property type="match status" value="1"/>
</dbReference>
<dbReference type="PROSITE" id="PS00014">
    <property type="entry name" value="ER_TARGET"/>
    <property type="match status" value="1"/>
</dbReference>
<organism>
    <name type="scientific">Homo sapiens</name>
    <name type="common">Human</name>
    <dbReference type="NCBI Taxonomy" id="9606"/>
    <lineage>
        <taxon>Eukaryota</taxon>
        <taxon>Metazoa</taxon>
        <taxon>Chordata</taxon>
        <taxon>Craniata</taxon>
        <taxon>Vertebrata</taxon>
        <taxon>Euteleostomi</taxon>
        <taxon>Mammalia</taxon>
        <taxon>Eutheria</taxon>
        <taxon>Euarchontoglires</taxon>
        <taxon>Primates</taxon>
        <taxon>Haplorrhini</taxon>
        <taxon>Catarrhini</taxon>
        <taxon>Hominidae</taxon>
        <taxon>Homo</taxon>
    </lineage>
</organism>
<evidence type="ECO:0000250" key="1"/>
<evidence type="ECO:0000256" key="2">
    <source>
        <dbReference type="SAM" id="MobiDB-lite"/>
    </source>
</evidence>
<evidence type="ECO:0000305" key="3"/>
<evidence type="ECO:0007744" key="4">
    <source>
    </source>
</evidence>
<reference key="1">
    <citation type="journal article" date="2005" name="Genomics">
        <title>The HSP90 family of genes in the human genome: insights into their divergence and evolution.</title>
        <authorList>
            <person name="Chen B."/>
            <person name="Piel W.H."/>
            <person name="Gui L."/>
            <person name="Bruford E."/>
            <person name="Monteiro A."/>
        </authorList>
    </citation>
    <scope>NUCLEOTIDE SEQUENCE [MRNA]</scope>
</reference>
<reference key="2">
    <citation type="journal article" date="2015" name="Cell Rep.">
        <title>SUMO-2 orchestrates chromatin modifiers in response to DNA damage.</title>
        <authorList>
            <person name="Hendriks I.A."/>
            <person name="Treffers L.W."/>
            <person name="Verlaan-de Vries M."/>
            <person name="Olsen J.V."/>
            <person name="Vertegaal A.C."/>
        </authorList>
    </citation>
    <scope>SUMOYLATION [LARGE SCALE ANALYSIS] AT LYS-130</scope>
    <scope>IDENTIFICATION BY MASS SPECTROMETRY [LARGE SCALE ANALYSIS]</scope>
</reference>
<gene>
    <name type="primary">HSP90B2P</name>
    <name type="synonym">GRP94B</name>
    <name type="synonym">GRP94P1</name>
    <name type="synonym">TRAP1</name>
</gene>
<keyword id="KW-0143">Chaperone</keyword>
<keyword id="KW-1017">Isopeptide bond</keyword>
<keyword id="KW-1267">Proteomics identification</keyword>
<keyword id="KW-1185">Reference proteome</keyword>
<keyword id="KW-0346">Stress response</keyword>
<keyword id="KW-0832">Ubl conjugation</keyword>
<comment type="function">
    <text evidence="1">Putative molecular chaperone.</text>
</comment>
<comment type="similarity">
    <text evidence="3">Belongs to the heat shock protein 90 family.</text>
</comment>
<comment type="caution">
    <text evidence="3">Could be the product of a pseudogene.</text>
</comment>
<proteinExistence type="uncertain"/>
<sequence>MAETIQEVEDEYKAFCKSFSKESDDPVACIHFTAEGEVTFKSILFVPTFVPRGLFDEYGSKKSDYIKLYVRCVFITDDFRDTMPKNLNFVKGVVDSGGLSLNVSCETLQQHKLLKVIRKKLVHKTLDMIKKIADEKYNDTFWKEFGTNIKLGVIEDHSNRTCLAKLLRFQSSHHPADITSLHQDVERMKEKQDKICLMAGGYEVIYLTEPVVEYCIQALPEFDGKRFQNVAKEGVKFDDSEKTKESHEAVEKEFEPLPNWVKDKAIKDKIEKAMVSQCLTESLCALVASQYGWSGNMERIMKAQAYQTGKGISTNYHASRKKTFEINPRHPLIRDMLRRIKEDEDDKTVLDLAVVEEPDEEPEETAEDKEQDKDKEMDVGTDEEKQETAKESTAEKDEL</sequence>
<accession>Q58FF3</accession>